<proteinExistence type="inferred from homology"/>
<dbReference type="EC" id="6.3.2.8" evidence="1"/>
<dbReference type="EMBL" id="CP000680">
    <property type="protein sequence ID" value="ABP83691.1"/>
    <property type="molecule type" value="Genomic_DNA"/>
</dbReference>
<dbReference type="SMR" id="A4XQS5"/>
<dbReference type="STRING" id="399739.Pmen_0923"/>
<dbReference type="KEGG" id="pmy:Pmen_0923"/>
<dbReference type="PATRIC" id="fig|399739.8.peg.932"/>
<dbReference type="eggNOG" id="COG0773">
    <property type="taxonomic scope" value="Bacteria"/>
</dbReference>
<dbReference type="HOGENOM" id="CLU_028104_2_2_6"/>
<dbReference type="OrthoDB" id="9804126at2"/>
<dbReference type="UniPathway" id="UPA00219"/>
<dbReference type="GO" id="GO:0005737">
    <property type="term" value="C:cytoplasm"/>
    <property type="evidence" value="ECO:0007669"/>
    <property type="project" value="UniProtKB-SubCell"/>
</dbReference>
<dbReference type="GO" id="GO:0005524">
    <property type="term" value="F:ATP binding"/>
    <property type="evidence" value="ECO:0007669"/>
    <property type="project" value="UniProtKB-UniRule"/>
</dbReference>
<dbReference type="GO" id="GO:0008763">
    <property type="term" value="F:UDP-N-acetylmuramate-L-alanine ligase activity"/>
    <property type="evidence" value="ECO:0007669"/>
    <property type="project" value="UniProtKB-UniRule"/>
</dbReference>
<dbReference type="GO" id="GO:0051301">
    <property type="term" value="P:cell division"/>
    <property type="evidence" value="ECO:0007669"/>
    <property type="project" value="UniProtKB-KW"/>
</dbReference>
<dbReference type="GO" id="GO:0071555">
    <property type="term" value="P:cell wall organization"/>
    <property type="evidence" value="ECO:0007669"/>
    <property type="project" value="UniProtKB-KW"/>
</dbReference>
<dbReference type="GO" id="GO:0009252">
    <property type="term" value="P:peptidoglycan biosynthetic process"/>
    <property type="evidence" value="ECO:0007669"/>
    <property type="project" value="UniProtKB-UniRule"/>
</dbReference>
<dbReference type="GO" id="GO:0008360">
    <property type="term" value="P:regulation of cell shape"/>
    <property type="evidence" value="ECO:0007669"/>
    <property type="project" value="UniProtKB-KW"/>
</dbReference>
<dbReference type="FunFam" id="3.40.1190.10:FF:000001">
    <property type="entry name" value="UDP-N-acetylmuramate--L-alanine ligase"/>
    <property type="match status" value="1"/>
</dbReference>
<dbReference type="Gene3D" id="3.90.190.20">
    <property type="entry name" value="Mur ligase, C-terminal domain"/>
    <property type="match status" value="1"/>
</dbReference>
<dbReference type="Gene3D" id="3.40.1190.10">
    <property type="entry name" value="Mur-like, catalytic domain"/>
    <property type="match status" value="1"/>
</dbReference>
<dbReference type="Gene3D" id="3.40.50.720">
    <property type="entry name" value="NAD(P)-binding Rossmann-like Domain"/>
    <property type="match status" value="1"/>
</dbReference>
<dbReference type="HAMAP" id="MF_00046">
    <property type="entry name" value="MurC"/>
    <property type="match status" value="1"/>
</dbReference>
<dbReference type="InterPro" id="IPR036565">
    <property type="entry name" value="Mur-like_cat_sf"/>
</dbReference>
<dbReference type="InterPro" id="IPR004101">
    <property type="entry name" value="Mur_ligase_C"/>
</dbReference>
<dbReference type="InterPro" id="IPR036615">
    <property type="entry name" value="Mur_ligase_C_dom_sf"/>
</dbReference>
<dbReference type="InterPro" id="IPR013221">
    <property type="entry name" value="Mur_ligase_cen"/>
</dbReference>
<dbReference type="InterPro" id="IPR000713">
    <property type="entry name" value="Mur_ligase_N"/>
</dbReference>
<dbReference type="InterPro" id="IPR050061">
    <property type="entry name" value="MurCDEF_pg_biosynth"/>
</dbReference>
<dbReference type="InterPro" id="IPR005758">
    <property type="entry name" value="UDP-N-AcMur_Ala_ligase_MurC"/>
</dbReference>
<dbReference type="NCBIfam" id="TIGR01082">
    <property type="entry name" value="murC"/>
    <property type="match status" value="1"/>
</dbReference>
<dbReference type="PANTHER" id="PTHR43445:SF3">
    <property type="entry name" value="UDP-N-ACETYLMURAMATE--L-ALANINE LIGASE"/>
    <property type="match status" value="1"/>
</dbReference>
<dbReference type="PANTHER" id="PTHR43445">
    <property type="entry name" value="UDP-N-ACETYLMURAMATE--L-ALANINE LIGASE-RELATED"/>
    <property type="match status" value="1"/>
</dbReference>
<dbReference type="Pfam" id="PF01225">
    <property type="entry name" value="Mur_ligase"/>
    <property type="match status" value="1"/>
</dbReference>
<dbReference type="Pfam" id="PF02875">
    <property type="entry name" value="Mur_ligase_C"/>
    <property type="match status" value="1"/>
</dbReference>
<dbReference type="Pfam" id="PF08245">
    <property type="entry name" value="Mur_ligase_M"/>
    <property type="match status" value="1"/>
</dbReference>
<dbReference type="SUPFAM" id="SSF51984">
    <property type="entry name" value="MurCD N-terminal domain"/>
    <property type="match status" value="1"/>
</dbReference>
<dbReference type="SUPFAM" id="SSF53623">
    <property type="entry name" value="MurD-like peptide ligases, catalytic domain"/>
    <property type="match status" value="1"/>
</dbReference>
<dbReference type="SUPFAM" id="SSF53244">
    <property type="entry name" value="MurD-like peptide ligases, peptide-binding domain"/>
    <property type="match status" value="1"/>
</dbReference>
<reference key="1">
    <citation type="submission" date="2007-04" db="EMBL/GenBank/DDBJ databases">
        <title>Complete sequence of Pseudomonas mendocina ymp.</title>
        <authorList>
            <consortium name="US DOE Joint Genome Institute"/>
            <person name="Copeland A."/>
            <person name="Lucas S."/>
            <person name="Lapidus A."/>
            <person name="Barry K."/>
            <person name="Glavina del Rio T."/>
            <person name="Dalin E."/>
            <person name="Tice H."/>
            <person name="Pitluck S."/>
            <person name="Kiss H."/>
            <person name="Brettin T."/>
            <person name="Detter J.C."/>
            <person name="Bruce D."/>
            <person name="Han C."/>
            <person name="Schmutz J."/>
            <person name="Larimer F."/>
            <person name="Land M."/>
            <person name="Hauser L."/>
            <person name="Kyrpides N."/>
            <person name="Mikhailova N."/>
            <person name="Hersman L."/>
            <person name="Dubois J."/>
            <person name="Maurice P."/>
            <person name="Richardson P."/>
        </authorList>
    </citation>
    <scope>NUCLEOTIDE SEQUENCE [LARGE SCALE GENOMIC DNA]</scope>
    <source>
        <strain>ymp</strain>
    </source>
</reference>
<comment type="function">
    <text evidence="1">Cell wall formation.</text>
</comment>
<comment type="catalytic activity">
    <reaction evidence="1">
        <text>UDP-N-acetyl-alpha-D-muramate + L-alanine + ATP = UDP-N-acetyl-alpha-D-muramoyl-L-alanine + ADP + phosphate + H(+)</text>
        <dbReference type="Rhea" id="RHEA:23372"/>
        <dbReference type="ChEBI" id="CHEBI:15378"/>
        <dbReference type="ChEBI" id="CHEBI:30616"/>
        <dbReference type="ChEBI" id="CHEBI:43474"/>
        <dbReference type="ChEBI" id="CHEBI:57972"/>
        <dbReference type="ChEBI" id="CHEBI:70757"/>
        <dbReference type="ChEBI" id="CHEBI:83898"/>
        <dbReference type="ChEBI" id="CHEBI:456216"/>
        <dbReference type="EC" id="6.3.2.8"/>
    </reaction>
</comment>
<comment type="pathway">
    <text evidence="1">Cell wall biogenesis; peptidoglycan biosynthesis.</text>
</comment>
<comment type="subcellular location">
    <subcellularLocation>
        <location evidence="1">Cytoplasm</location>
    </subcellularLocation>
</comment>
<comment type="similarity">
    <text evidence="1">Belongs to the MurCDEF family.</text>
</comment>
<sequence>MAKSPAAVKAEVRRMRRIRRIHFVGIGGVGMCGIAEVLLNLGYEVSGSDLKASAVTERLESFGAKIFIGHAAENAEQADVLVVSSAVNTSNPEVATALERRIPVVPRAEMLAELMRYRHGIAVAGTHGKTTTTSLLASVFAAGGLDPTFVIGGRLNAAGTNAQLGSSRFLIAEADESDASFLHLQPMVSVVTNIDADHMSTYGGDFNRLKKTFIEFLHNLPFYGLAVLCVDDPVVRELLPQVGRPTVTYGFAEDADVRAINVRQEGMRTYFTVLRPDCEPLDVSVNMPGNHNVLNALATIAIATDEGIDDAAIVAGLSGFQGVGRRFQVYGELPVDGGSVMLVDDYGHHPREVAAVIKAVRGGWPERRLVMVYQPHRYSRTRDLYDDFVQVLGEANVLLLVEVYPAGEEPIPGADSRQMCHSIRQRGQLDPIYVERGVDLAPLLKPLLRAGDILLCQGAGDIGAVAPQLIKHPLFVGESK</sequence>
<keyword id="KW-0067">ATP-binding</keyword>
<keyword id="KW-0131">Cell cycle</keyword>
<keyword id="KW-0132">Cell division</keyword>
<keyword id="KW-0133">Cell shape</keyword>
<keyword id="KW-0961">Cell wall biogenesis/degradation</keyword>
<keyword id="KW-0963">Cytoplasm</keyword>
<keyword id="KW-0436">Ligase</keyword>
<keyword id="KW-0547">Nucleotide-binding</keyword>
<keyword id="KW-0573">Peptidoglycan synthesis</keyword>
<feature type="chain" id="PRO_0000336857" description="UDP-N-acetylmuramate--L-alanine ligase">
    <location>
        <begin position="1"/>
        <end position="480"/>
    </location>
</feature>
<feature type="binding site" evidence="1">
    <location>
        <begin position="125"/>
        <end position="131"/>
    </location>
    <ligand>
        <name>ATP</name>
        <dbReference type="ChEBI" id="CHEBI:30616"/>
    </ligand>
</feature>
<accession>A4XQS5</accession>
<protein>
    <recommendedName>
        <fullName evidence="1">UDP-N-acetylmuramate--L-alanine ligase</fullName>
        <ecNumber evidence="1">6.3.2.8</ecNumber>
    </recommendedName>
    <alternativeName>
        <fullName evidence="1">UDP-N-acetylmuramoyl-L-alanine synthetase</fullName>
    </alternativeName>
</protein>
<gene>
    <name evidence="1" type="primary">murC</name>
    <name type="ordered locus">Pmen_0923</name>
</gene>
<organism>
    <name type="scientific">Ectopseudomonas mendocina (strain ymp)</name>
    <name type="common">Pseudomonas mendocina</name>
    <dbReference type="NCBI Taxonomy" id="399739"/>
    <lineage>
        <taxon>Bacteria</taxon>
        <taxon>Pseudomonadati</taxon>
        <taxon>Pseudomonadota</taxon>
        <taxon>Gammaproteobacteria</taxon>
        <taxon>Pseudomonadales</taxon>
        <taxon>Pseudomonadaceae</taxon>
        <taxon>Ectopseudomonas</taxon>
    </lineage>
</organism>
<evidence type="ECO:0000255" key="1">
    <source>
        <dbReference type="HAMAP-Rule" id="MF_00046"/>
    </source>
</evidence>
<name>MURC_ECTM1</name>